<evidence type="ECO:0000250" key="1">
    <source>
        <dbReference type="UniProtKB" id="P0AD68"/>
    </source>
</evidence>
<evidence type="ECO:0000255" key="2"/>
<evidence type="ECO:0000305" key="3"/>
<name>FTSIH_CHLAT</name>
<sequence>MKPYEPKSWVTRVFLVWWLTALSCFFISGRLIYLQLLKGKWLKEKALKQQTVTLKTFQPRRNICDRNGIPLAIDTLAYDVFAHPLYFSISIEEVANKLSPILCIDSLSIQKLLKPTSTGICLASQLPENTGKLIASLRLDGIDLIKHPKRYYPYKEIVGNVIGYVDTSHQGQAGIELSCQESLQLNSPTLTSSIDGRGVLISHQIPKELFIQDNLSLQLTLDLELQKIAYKALKQGLENCKGKRGTVLILDPKTGGILTLVALPSYDPNIYYDFPIERFKPWPVTDLYEPGSTFKPLNIAIALETKAISPEDSFYDEGCIRVGDSIITNNDYNSYKPLPCLPNTYNKIVKLLANSSNVGMVHILERIAPEIYHSWLSKLDLGHAASPLETDLPWASESSLKDINEFVCYEIEPAAASFGQGLAMTPIKLAQLYASLANGGILVKPYLVTGLANAAEDTQKAKGIDLPSYNIRKKNLGNHLSWHKAEPSYLFLKRSGIRVTDLLRHIKAEGRFALPFRKNLLQLFTQDAHRTTELQLEPKAHQPQLLRPTRHAVYATNQSKRVFSHETTKLLLDMLEDVIWNGTGSSCFVEGYRIGGKTGTSQKHTQEGGYSKTKIITSFAAIFPTEDPQYVILTVIDEPNIPLSFGSNTAAPIVKSIIESLIDIKKMKPTIPIIKVKKD</sequence>
<organism>
    <name type="scientific">Chlorokybus atmophyticus</name>
    <name type="common">Soil alga</name>
    <dbReference type="NCBI Taxonomy" id="3144"/>
    <lineage>
        <taxon>Eukaryota</taxon>
        <taxon>Viridiplantae</taxon>
        <taxon>Streptophyta</taxon>
        <taxon>Chlorokybophyceae</taxon>
        <taxon>Chlorokybales</taxon>
        <taxon>Chlorokybaceae</taxon>
        <taxon>Chlorokybus</taxon>
    </lineage>
</organism>
<feature type="chain" id="PRO_0000314459" description="Peptidoglycan D,D-transpeptidase FtsI homolog">
    <location>
        <begin position="1"/>
        <end position="679"/>
    </location>
</feature>
<feature type="transmembrane region" description="Helical" evidence="2">
    <location>
        <begin position="13"/>
        <end position="33"/>
    </location>
</feature>
<feature type="active site" description="Acyl-ester intermediate" evidence="1">
    <location>
        <position position="292"/>
    </location>
</feature>
<comment type="catalytic activity">
    <reaction evidence="1">
        <text>Preferential cleavage: (Ac)2-L-Lys-D-Ala-|-D-Ala. Also transpeptidation of peptidyl-alanyl moieties that are N-acyl substituents of D-alanine.</text>
        <dbReference type="EC" id="3.4.16.4"/>
    </reaction>
</comment>
<comment type="subcellular location">
    <subcellularLocation>
        <location evidence="3">Plastid</location>
        <location evidence="3">Chloroplast membrane</location>
        <topology evidence="3">Single-pass membrane protein</topology>
    </subcellularLocation>
</comment>
<comment type="miscellaneous">
    <text>The presence of this gene in the chloroplast genome suggests there may be an unsuspected vestigal peptidoglycan layer in this organism's chloroplasts.</text>
</comment>
<comment type="similarity">
    <text evidence="3">Belongs to the transpeptidase family.</text>
</comment>
<reference key="1">
    <citation type="journal article" date="2007" name="BMC Biol.">
        <title>A clade uniting the green algae Mesostigma viride and Chlorokybus atmophyticus represents the deepest branch of the Streptophyta in chloroplast genome-based phylogenies.</title>
        <authorList>
            <person name="Lemieux C."/>
            <person name="Otis C."/>
            <person name="Turmel M."/>
        </authorList>
    </citation>
    <scope>NUCLEOTIDE SEQUENCE [LARGE SCALE GENOMIC DNA]</scope>
    <source>
        <strain>SAG 48.80</strain>
    </source>
</reference>
<accession>A2CI41</accession>
<keyword id="KW-0121">Carboxypeptidase</keyword>
<keyword id="KW-0133">Cell shape</keyword>
<keyword id="KW-0150">Chloroplast</keyword>
<keyword id="KW-0378">Hydrolase</keyword>
<keyword id="KW-0472">Membrane</keyword>
<keyword id="KW-0573">Peptidoglycan synthesis</keyword>
<keyword id="KW-0934">Plastid</keyword>
<keyword id="KW-0645">Protease</keyword>
<keyword id="KW-0812">Transmembrane</keyword>
<keyword id="KW-1133">Transmembrane helix</keyword>
<gene>
    <name type="primary">ftsI</name>
</gene>
<proteinExistence type="inferred from homology"/>
<dbReference type="EC" id="3.4.16.4" evidence="1"/>
<dbReference type="EMBL" id="DQ422812">
    <property type="protein sequence ID" value="ABM87954.1"/>
    <property type="molecule type" value="Genomic_DNA"/>
</dbReference>
<dbReference type="RefSeq" id="YP_001019071.1">
    <property type="nucleotide sequence ID" value="NC_008822.1"/>
</dbReference>
<dbReference type="SMR" id="A2CI41"/>
<dbReference type="GeneID" id="4783320"/>
<dbReference type="GO" id="GO:0031969">
    <property type="term" value="C:chloroplast membrane"/>
    <property type="evidence" value="ECO:0007669"/>
    <property type="project" value="UniProtKB-SubCell"/>
</dbReference>
<dbReference type="GO" id="GO:0005886">
    <property type="term" value="C:plasma membrane"/>
    <property type="evidence" value="ECO:0007669"/>
    <property type="project" value="TreeGrafter"/>
</dbReference>
<dbReference type="GO" id="GO:0008658">
    <property type="term" value="F:penicillin binding"/>
    <property type="evidence" value="ECO:0007669"/>
    <property type="project" value="InterPro"/>
</dbReference>
<dbReference type="GO" id="GO:0009002">
    <property type="term" value="F:serine-type D-Ala-D-Ala carboxypeptidase activity"/>
    <property type="evidence" value="ECO:0007669"/>
    <property type="project" value="UniProtKB-EC"/>
</dbReference>
<dbReference type="GO" id="GO:0071555">
    <property type="term" value="P:cell wall organization"/>
    <property type="evidence" value="ECO:0007669"/>
    <property type="project" value="TreeGrafter"/>
</dbReference>
<dbReference type="GO" id="GO:0006508">
    <property type="term" value="P:proteolysis"/>
    <property type="evidence" value="ECO:0007669"/>
    <property type="project" value="UniProtKB-KW"/>
</dbReference>
<dbReference type="GO" id="GO:0008360">
    <property type="term" value="P:regulation of cell shape"/>
    <property type="evidence" value="ECO:0007669"/>
    <property type="project" value="UniProtKB-KW"/>
</dbReference>
<dbReference type="Gene3D" id="3.30.450.330">
    <property type="match status" value="1"/>
</dbReference>
<dbReference type="Gene3D" id="3.40.710.10">
    <property type="entry name" value="DD-peptidase/beta-lactamase superfamily"/>
    <property type="match status" value="1"/>
</dbReference>
<dbReference type="Gene3D" id="3.90.1310.10">
    <property type="entry name" value="Penicillin-binding protein 2a (Domain 2)"/>
    <property type="match status" value="1"/>
</dbReference>
<dbReference type="InterPro" id="IPR050515">
    <property type="entry name" value="Bact_Transpept/Beta-Lactamase"/>
</dbReference>
<dbReference type="InterPro" id="IPR012338">
    <property type="entry name" value="Beta-lactam/transpept-like"/>
</dbReference>
<dbReference type="InterPro" id="IPR005311">
    <property type="entry name" value="PBP_dimer"/>
</dbReference>
<dbReference type="InterPro" id="IPR036138">
    <property type="entry name" value="PBP_dimer_sf"/>
</dbReference>
<dbReference type="InterPro" id="IPR001460">
    <property type="entry name" value="PCN-bd_Tpept"/>
</dbReference>
<dbReference type="PANTHER" id="PTHR30627">
    <property type="entry name" value="PEPTIDOGLYCAN D,D-TRANSPEPTIDASE"/>
    <property type="match status" value="1"/>
</dbReference>
<dbReference type="PANTHER" id="PTHR30627:SF1">
    <property type="entry name" value="PEPTIDOGLYCAN D,D-TRANSPEPTIDASE FTSI"/>
    <property type="match status" value="1"/>
</dbReference>
<dbReference type="Pfam" id="PF03717">
    <property type="entry name" value="PBP_dimer"/>
    <property type="match status" value="1"/>
</dbReference>
<dbReference type="Pfam" id="PF00905">
    <property type="entry name" value="Transpeptidase"/>
    <property type="match status" value="2"/>
</dbReference>
<dbReference type="SUPFAM" id="SSF56601">
    <property type="entry name" value="beta-lactamase/transpeptidase-like"/>
    <property type="match status" value="1"/>
</dbReference>
<dbReference type="SUPFAM" id="SSF56519">
    <property type="entry name" value="Penicillin binding protein dimerisation domain"/>
    <property type="match status" value="1"/>
</dbReference>
<protein>
    <recommendedName>
        <fullName evidence="3">Peptidoglycan D,D-transpeptidase FtsI homolog</fullName>
        <ecNumber evidence="1">3.4.16.4</ecNumber>
    </recommendedName>
</protein>
<geneLocation type="chloroplast"/>